<dbReference type="EMBL" id="AP009370">
    <property type="protein sequence ID" value="BAF50129.1"/>
    <property type="molecule type" value="Genomic_DNA"/>
</dbReference>
<dbReference type="RefSeq" id="YP_001123305.1">
    <property type="nucleotide sequence ID" value="NC_009269.1"/>
</dbReference>
<dbReference type="SMR" id="A4QKC4"/>
<dbReference type="GeneID" id="4961946"/>
<dbReference type="GO" id="GO:0009535">
    <property type="term" value="C:chloroplast thylakoid membrane"/>
    <property type="evidence" value="ECO:0007669"/>
    <property type="project" value="UniProtKB-SubCell"/>
</dbReference>
<dbReference type="GO" id="GO:0009512">
    <property type="term" value="C:cytochrome b6f complex"/>
    <property type="evidence" value="ECO:0007669"/>
    <property type="project" value="InterPro"/>
</dbReference>
<dbReference type="GO" id="GO:0045158">
    <property type="term" value="F:electron transporter, transferring electrons within cytochrome b6/f complex of photosystem II activity"/>
    <property type="evidence" value="ECO:0007669"/>
    <property type="project" value="UniProtKB-UniRule"/>
</dbReference>
<dbReference type="GO" id="GO:0017004">
    <property type="term" value="P:cytochrome complex assembly"/>
    <property type="evidence" value="ECO:0007669"/>
    <property type="project" value="UniProtKB-UniRule"/>
</dbReference>
<dbReference type="GO" id="GO:0015979">
    <property type="term" value="P:photosynthesis"/>
    <property type="evidence" value="ECO:0007669"/>
    <property type="project" value="UniProtKB-KW"/>
</dbReference>
<dbReference type="HAMAP" id="MF_00432">
    <property type="entry name" value="Cytb6_f_PetG"/>
    <property type="match status" value="1"/>
</dbReference>
<dbReference type="InterPro" id="IPR003683">
    <property type="entry name" value="Cyt_6/f_cplx_su5"/>
</dbReference>
<dbReference type="InterPro" id="IPR036099">
    <property type="entry name" value="Cyt_6/f_cplx_su5_sf"/>
</dbReference>
<dbReference type="NCBIfam" id="NF001907">
    <property type="entry name" value="PRK00665.1"/>
    <property type="match status" value="1"/>
</dbReference>
<dbReference type="Pfam" id="PF02529">
    <property type="entry name" value="PetG"/>
    <property type="match status" value="1"/>
</dbReference>
<dbReference type="PIRSF" id="PIRSF000034">
    <property type="entry name" value="Cyt_b6-f_V"/>
    <property type="match status" value="1"/>
</dbReference>
<dbReference type="SUPFAM" id="SSF103446">
    <property type="entry name" value="PetG subunit of the cytochrome b6f complex"/>
    <property type="match status" value="1"/>
</dbReference>
<feature type="chain" id="PRO_0000355370" description="Cytochrome b6-f complex subunit 5">
    <location>
        <begin position="1"/>
        <end position="37"/>
    </location>
</feature>
<feature type="transmembrane region" description="Helical" evidence="1">
    <location>
        <begin position="5"/>
        <end position="25"/>
    </location>
</feature>
<proteinExistence type="inferred from homology"/>
<reference key="1">
    <citation type="submission" date="2007-03" db="EMBL/GenBank/DDBJ databases">
        <title>Sequencing analysis of Barbarea verna chloroplast DNA.</title>
        <authorList>
            <person name="Hosouchi T."/>
            <person name="Tsuruoka H."/>
            <person name="Kotani H."/>
        </authorList>
    </citation>
    <scope>NUCLEOTIDE SEQUENCE [LARGE SCALE GENOMIC DNA]</scope>
</reference>
<name>PETG_BARVE</name>
<accession>A4QKC4</accession>
<keyword id="KW-0150">Chloroplast</keyword>
<keyword id="KW-0249">Electron transport</keyword>
<keyword id="KW-0472">Membrane</keyword>
<keyword id="KW-0602">Photosynthesis</keyword>
<keyword id="KW-0934">Plastid</keyword>
<keyword id="KW-0793">Thylakoid</keyword>
<keyword id="KW-0812">Transmembrane</keyword>
<keyword id="KW-1133">Transmembrane helix</keyword>
<keyword id="KW-0813">Transport</keyword>
<evidence type="ECO:0000255" key="1">
    <source>
        <dbReference type="HAMAP-Rule" id="MF_00432"/>
    </source>
</evidence>
<geneLocation type="chloroplast"/>
<comment type="function">
    <text evidence="1">Component of the cytochrome b6-f complex, which mediates electron transfer between photosystem II (PSII) and photosystem I (PSI), cyclic electron flow around PSI, and state transitions. PetG is required for either the stability or assembly of the cytochrome b6-f complex.</text>
</comment>
<comment type="subunit">
    <text evidence="1">The 4 large subunits of the cytochrome b6-f complex are cytochrome b6, subunit IV (17 kDa polypeptide, PetD), cytochrome f and the Rieske protein, while the 4 small subunits are PetG, PetL, PetM and PetN. The complex functions as a dimer.</text>
</comment>
<comment type="subcellular location">
    <subcellularLocation>
        <location evidence="1">Plastid</location>
        <location evidence="1">Chloroplast thylakoid membrane</location>
        <topology evidence="1">Single-pass membrane protein</topology>
    </subcellularLocation>
</comment>
<comment type="similarity">
    <text evidence="1">Belongs to the PetG family.</text>
</comment>
<organism>
    <name type="scientific">Barbarea verna</name>
    <name type="common">Land cress</name>
    <name type="synonym">Erysimum vernum</name>
    <dbReference type="NCBI Taxonomy" id="50458"/>
    <lineage>
        <taxon>Eukaryota</taxon>
        <taxon>Viridiplantae</taxon>
        <taxon>Streptophyta</taxon>
        <taxon>Embryophyta</taxon>
        <taxon>Tracheophyta</taxon>
        <taxon>Spermatophyta</taxon>
        <taxon>Magnoliopsida</taxon>
        <taxon>eudicotyledons</taxon>
        <taxon>Gunneridae</taxon>
        <taxon>Pentapetalae</taxon>
        <taxon>rosids</taxon>
        <taxon>malvids</taxon>
        <taxon>Brassicales</taxon>
        <taxon>Brassicaceae</taxon>
        <taxon>Cardamineae</taxon>
        <taxon>Barbarea</taxon>
    </lineage>
</organism>
<protein>
    <recommendedName>
        <fullName evidence="1">Cytochrome b6-f complex subunit 5</fullName>
    </recommendedName>
    <alternativeName>
        <fullName evidence="1">Cytochrome b6-f complex subunit PetG</fullName>
    </alternativeName>
    <alternativeName>
        <fullName evidence="1">Cytochrome b6-f complex subunit V</fullName>
    </alternativeName>
</protein>
<sequence length="37" mass="4204">MIEVFLFGIVLGLIPITLAGLFVTAYLQYRRGDQLDF</sequence>
<gene>
    <name evidence="1" type="primary">petG</name>
</gene>